<reference key="1">
    <citation type="journal article" date="2010" name="Genome Biol.">
        <title>Structure and dynamics of the pan-genome of Streptococcus pneumoniae and closely related species.</title>
        <authorList>
            <person name="Donati C."/>
            <person name="Hiller N.L."/>
            <person name="Tettelin H."/>
            <person name="Muzzi A."/>
            <person name="Croucher N.J."/>
            <person name="Angiuoli S.V."/>
            <person name="Oggioni M."/>
            <person name="Dunning Hotopp J.C."/>
            <person name="Hu F.Z."/>
            <person name="Riley D.R."/>
            <person name="Covacci A."/>
            <person name="Mitchell T.J."/>
            <person name="Bentley S.D."/>
            <person name="Kilian M."/>
            <person name="Ehrlich G.D."/>
            <person name="Rappuoli R."/>
            <person name="Moxon E.R."/>
            <person name="Masignani V."/>
        </authorList>
    </citation>
    <scope>NUCLEOTIDE SEQUENCE [LARGE SCALE GENOMIC DNA]</scope>
    <source>
        <strain>Hungary19A-6</strain>
    </source>
</reference>
<keyword id="KW-0028">Amino-acid biosynthesis</keyword>
<keyword id="KW-0057">Aromatic amino acid biosynthesis</keyword>
<keyword id="KW-0521">NADP</keyword>
<keyword id="KW-0560">Oxidoreductase</keyword>
<proteinExistence type="inferred from homology"/>
<comment type="function">
    <text evidence="1">Involved in the biosynthesis of the chorismate, which leads to the biosynthesis of aromatic amino acids. Catalyzes the reversible NADPH linked reduction of 3-dehydroshikimate (DHSA) to yield shikimate (SA).</text>
</comment>
<comment type="catalytic activity">
    <reaction evidence="1">
        <text>shikimate + NADP(+) = 3-dehydroshikimate + NADPH + H(+)</text>
        <dbReference type="Rhea" id="RHEA:17737"/>
        <dbReference type="ChEBI" id="CHEBI:15378"/>
        <dbReference type="ChEBI" id="CHEBI:16630"/>
        <dbReference type="ChEBI" id="CHEBI:36208"/>
        <dbReference type="ChEBI" id="CHEBI:57783"/>
        <dbReference type="ChEBI" id="CHEBI:58349"/>
        <dbReference type="EC" id="1.1.1.25"/>
    </reaction>
</comment>
<comment type="pathway">
    <text evidence="1">Metabolic intermediate biosynthesis; chorismate biosynthesis; chorismate from D-erythrose 4-phosphate and phosphoenolpyruvate: step 4/7.</text>
</comment>
<comment type="subunit">
    <text evidence="1">Homodimer.</text>
</comment>
<comment type="similarity">
    <text evidence="1">Belongs to the shikimate dehydrogenase family.</text>
</comment>
<protein>
    <recommendedName>
        <fullName evidence="1">Shikimate dehydrogenase (NADP(+))</fullName>
        <shortName evidence="1">SDH</shortName>
        <ecNumber evidence="1">1.1.1.25</ecNumber>
    </recommendedName>
</protein>
<sequence>MKLDGYTRLAAVVANPIKHSISPFIHNRAFEATATNGAYVAWEIEASDLVETVANIRRYQMFGINLSMPYKEQVIPYLDKLSDEARLIGAVNTVVNENGNLIGYNTDGKGFFKCLPSFTISGKKMTLLGAGGAAKSILAQAILDGVSQISVFVRSVSMEKTRPYLDKLQEQTGFKVDLCALEYVSELQARIAESDLLVNATSVGMDGQSSPVPENIVLPETLLVADIIYQPFETPFLKWARSQGNPAVNGLGMLLYQAAEAFQLWTGKEMPTEEIWQSLTEKYQ</sequence>
<gene>
    <name evidence="1" type="primary">aroE</name>
    <name type="ordered locus">SPH_1508</name>
</gene>
<dbReference type="EC" id="1.1.1.25" evidence="1"/>
<dbReference type="EMBL" id="CP000936">
    <property type="protein sequence ID" value="ACA36233.1"/>
    <property type="molecule type" value="Genomic_DNA"/>
</dbReference>
<dbReference type="RefSeq" id="WP_000762485.1">
    <property type="nucleotide sequence ID" value="NC_010380.1"/>
</dbReference>
<dbReference type="SMR" id="B1ICH7"/>
<dbReference type="KEGG" id="spv:SPH_1508"/>
<dbReference type="HOGENOM" id="CLU_044063_4_4_9"/>
<dbReference type="UniPathway" id="UPA00053">
    <property type="reaction ID" value="UER00087"/>
</dbReference>
<dbReference type="Proteomes" id="UP000002163">
    <property type="component" value="Chromosome"/>
</dbReference>
<dbReference type="GO" id="GO:0050661">
    <property type="term" value="F:NADP binding"/>
    <property type="evidence" value="ECO:0007669"/>
    <property type="project" value="InterPro"/>
</dbReference>
<dbReference type="GO" id="GO:0004764">
    <property type="term" value="F:shikimate 3-dehydrogenase (NADP+) activity"/>
    <property type="evidence" value="ECO:0007669"/>
    <property type="project" value="UniProtKB-UniRule"/>
</dbReference>
<dbReference type="GO" id="GO:0008652">
    <property type="term" value="P:amino acid biosynthetic process"/>
    <property type="evidence" value="ECO:0007669"/>
    <property type="project" value="UniProtKB-KW"/>
</dbReference>
<dbReference type="GO" id="GO:0009073">
    <property type="term" value="P:aromatic amino acid family biosynthetic process"/>
    <property type="evidence" value="ECO:0007669"/>
    <property type="project" value="UniProtKB-KW"/>
</dbReference>
<dbReference type="GO" id="GO:0009423">
    <property type="term" value="P:chorismate biosynthetic process"/>
    <property type="evidence" value="ECO:0007669"/>
    <property type="project" value="UniProtKB-UniRule"/>
</dbReference>
<dbReference type="GO" id="GO:0019632">
    <property type="term" value="P:shikimate metabolic process"/>
    <property type="evidence" value="ECO:0007669"/>
    <property type="project" value="InterPro"/>
</dbReference>
<dbReference type="CDD" id="cd01065">
    <property type="entry name" value="NAD_bind_Shikimate_DH"/>
    <property type="match status" value="1"/>
</dbReference>
<dbReference type="FunFam" id="3.40.50.10860:FF:000004">
    <property type="entry name" value="Quinate/shikimate dehydrogenase"/>
    <property type="match status" value="1"/>
</dbReference>
<dbReference type="FunFam" id="3.40.50.720:FF:000505">
    <property type="entry name" value="Shikimate dehydrogenase (NADP(+))"/>
    <property type="match status" value="1"/>
</dbReference>
<dbReference type="Gene3D" id="3.40.50.10860">
    <property type="entry name" value="Leucine Dehydrogenase, chain A, domain 1"/>
    <property type="match status" value="1"/>
</dbReference>
<dbReference type="Gene3D" id="3.40.50.720">
    <property type="entry name" value="NAD(P)-binding Rossmann-like Domain"/>
    <property type="match status" value="1"/>
</dbReference>
<dbReference type="HAMAP" id="MF_00222">
    <property type="entry name" value="Shikimate_DH_AroE"/>
    <property type="match status" value="1"/>
</dbReference>
<dbReference type="InterPro" id="IPR046346">
    <property type="entry name" value="Aminoacid_DH-like_N_sf"/>
</dbReference>
<dbReference type="InterPro" id="IPR036291">
    <property type="entry name" value="NAD(P)-bd_dom_sf"/>
</dbReference>
<dbReference type="InterPro" id="IPR041121">
    <property type="entry name" value="SDH_C"/>
</dbReference>
<dbReference type="InterPro" id="IPR011342">
    <property type="entry name" value="Shikimate_DH"/>
</dbReference>
<dbReference type="InterPro" id="IPR013708">
    <property type="entry name" value="Shikimate_DH-bd_N"/>
</dbReference>
<dbReference type="InterPro" id="IPR022893">
    <property type="entry name" value="Shikimate_DH_fam"/>
</dbReference>
<dbReference type="NCBIfam" id="TIGR00507">
    <property type="entry name" value="aroE"/>
    <property type="match status" value="1"/>
</dbReference>
<dbReference type="NCBIfam" id="NF001315">
    <property type="entry name" value="PRK00258.2-4"/>
    <property type="match status" value="1"/>
</dbReference>
<dbReference type="PANTHER" id="PTHR21089:SF1">
    <property type="entry name" value="BIFUNCTIONAL 3-DEHYDROQUINATE DEHYDRATASE_SHIKIMATE DEHYDROGENASE, CHLOROPLASTIC"/>
    <property type="match status" value="1"/>
</dbReference>
<dbReference type="PANTHER" id="PTHR21089">
    <property type="entry name" value="SHIKIMATE DEHYDROGENASE"/>
    <property type="match status" value="1"/>
</dbReference>
<dbReference type="Pfam" id="PF18317">
    <property type="entry name" value="SDH_C"/>
    <property type="match status" value="1"/>
</dbReference>
<dbReference type="Pfam" id="PF08501">
    <property type="entry name" value="Shikimate_dh_N"/>
    <property type="match status" value="1"/>
</dbReference>
<dbReference type="SUPFAM" id="SSF53223">
    <property type="entry name" value="Aminoacid dehydrogenase-like, N-terminal domain"/>
    <property type="match status" value="1"/>
</dbReference>
<dbReference type="SUPFAM" id="SSF51735">
    <property type="entry name" value="NAD(P)-binding Rossmann-fold domains"/>
    <property type="match status" value="1"/>
</dbReference>
<organism>
    <name type="scientific">Streptococcus pneumoniae (strain Hungary19A-6)</name>
    <dbReference type="NCBI Taxonomy" id="487214"/>
    <lineage>
        <taxon>Bacteria</taxon>
        <taxon>Bacillati</taxon>
        <taxon>Bacillota</taxon>
        <taxon>Bacilli</taxon>
        <taxon>Lactobacillales</taxon>
        <taxon>Streptococcaceae</taxon>
        <taxon>Streptococcus</taxon>
    </lineage>
</organism>
<feature type="chain" id="PRO_1000100145" description="Shikimate dehydrogenase (NADP(+))">
    <location>
        <begin position="1"/>
        <end position="284"/>
    </location>
</feature>
<feature type="active site" description="Proton acceptor" evidence="1">
    <location>
        <position position="71"/>
    </location>
</feature>
<feature type="binding site" evidence="1">
    <location>
        <begin position="20"/>
        <end position="22"/>
    </location>
    <ligand>
        <name>shikimate</name>
        <dbReference type="ChEBI" id="CHEBI:36208"/>
    </ligand>
</feature>
<feature type="binding site" evidence="1">
    <location>
        <position position="67"/>
    </location>
    <ligand>
        <name>shikimate</name>
        <dbReference type="ChEBI" id="CHEBI:36208"/>
    </ligand>
</feature>
<feature type="binding site" evidence="1">
    <location>
        <position position="83"/>
    </location>
    <ligand>
        <name>NADP(+)</name>
        <dbReference type="ChEBI" id="CHEBI:58349"/>
    </ligand>
</feature>
<feature type="binding site" evidence="1">
    <location>
        <position position="92"/>
    </location>
    <ligand>
        <name>shikimate</name>
        <dbReference type="ChEBI" id="CHEBI:36208"/>
    </ligand>
</feature>
<feature type="binding site" evidence="1">
    <location>
        <position position="107"/>
    </location>
    <ligand>
        <name>shikimate</name>
        <dbReference type="ChEBI" id="CHEBI:36208"/>
    </ligand>
</feature>
<feature type="binding site" evidence="1">
    <location>
        <begin position="129"/>
        <end position="133"/>
    </location>
    <ligand>
        <name>NADP(+)</name>
        <dbReference type="ChEBI" id="CHEBI:58349"/>
    </ligand>
</feature>
<feature type="binding site" evidence="1">
    <location>
        <position position="227"/>
    </location>
    <ligand>
        <name>NADP(+)</name>
        <dbReference type="ChEBI" id="CHEBI:58349"/>
    </ligand>
</feature>
<feature type="binding site" evidence="1">
    <location>
        <position position="229"/>
    </location>
    <ligand>
        <name>shikimate</name>
        <dbReference type="ChEBI" id="CHEBI:36208"/>
    </ligand>
</feature>
<feature type="binding site" evidence="1">
    <location>
        <position position="250"/>
    </location>
    <ligand>
        <name>NADP(+)</name>
        <dbReference type="ChEBI" id="CHEBI:58349"/>
    </ligand>
</feature>
<accession>B1ICH7</accession>
<name>AROE_STRPI</name>
<evidence type="ECO:0000255" key="1">
    <source>
        <dbReference type="HAMAP-Rule" id="MF_00222"/>
    </source>
</evidence>